<sequence length="329" mass="34811">MAAKLMHAIQYSGYGGGTDALKHVEVAVPDPKSDELLLKIEAATLNPIDWKIQKGVLRPLLPRKFPTIPGTDVAGEVVQAGSAVNRFKTGDKVVAVLSHATGGALAEYAVAKENLTVARPPEVSAAEGAALPVAALTAHQALTQFANIKLDGSGERKNILITAASGGVGHYAVQLAKLGNTHVTATCGARNLDFVKGLGADEVLDYKTPEGASLTSPSGKKYDYVVHGASGIPWSTFEPNLSEAGKVIDLTPGPTAMMTFAWKKLTFSKKQLVPLLLIPKIPNFEYVVNLVKEKKLKTVIDSKHPLSKGEDAWSRIMGGHATGKIIIEP</sequence>
<feature type="chain" id="PRO_0000160916" description="Quinone-oxidoreductase homolog, chloroplastic">
    <location>
        <begin position="1"/>
        <end position="329"/>
    </location>
</feature>
<proteinExistence type="evidence at protein level"/>
<protein>
    <recommendedName>
        <fullName>Quinone-oxidoreductase homolog, chloroplastic</fullName>
        <ecNumber>1.-.-.-</ecNumber>
    </recommendedName>
    <alternativeName>
        <fullName>ceQORH</fullName>
    </alternativeName>
</protein>
<organism>
    <name type="scientific">Spinacia oleracea</name>
    <name type="common">Spinach</name>
    <dbReference type="NCBI Taxonomy" id="3562"/>
    <lineage>
        <taxon>Eukaryota</taxon>
        <taxon>Viridiplantae</taxon>
        <taxon>Streptophyta</taxon>
        <taxon>Embryophyta</taxon>
        <taxon>Tracheophyta</taxon>
        <taxon>Spermatophyta</taxon>
        <taxon>Magnoliopsida</taxon>
        <taxon>eudicotyledons</taxon>
        <taxon>Gunneridae</taxon>
        <taxon>Pentapetalae</taxon>
        <taxon>Caryophyllales</taxon>
        <taxon>Chenopodiaceae</taxon>
        <taxon>Chenopodioideae</taxon>
        <taxon>Anserineae</taxon>
        <taxon>Spinacia</taxon>
    </lineage>
</organism>
<keyword id="KW-0150">Chloroplast</keyword>
<keyword id="KW-0903">Direct protein sequencing</keyword>
<keyword id="KW-0472">Membrane</keyword>
<keyword id="KW-0520">NAD</keyword>
<keyword id="KW-0560">Oxidoreductase</keyword>
<keyword id="KW-0934">Plastid</keyword>
<keyword id="KW-1001">Plastid inner membrane</keyword>
<keyword id="KW-1185">Reference proteome</keyword>
<gene>
    <name type="primary">QOR</name>
</gene>
<evidence type="ECO:0000269" key="1">
    <source>
    </source>
</evidence>
<evidence type="ECO:0000305" key="2"/>
<reference key="1">
    <citation type="journal article" date="2002" name="J. Biol. Chem.">
        <title>Non-canonical transit peptide for import into the chloroplast.</title>
        <authorList>
            <person name="Miras S."/>
            <person name="Salvi D."/>
            <person name="Ferro M."/>
            <person name="Grunwald D."/>
            <person name="Garin J."/>
            <person name="Joyard J."/>
            <person name="Rolland N."/>
        </authorList>
    </citation>
    <scope>NUCLEOTIDE SEQUENCE [MRNA]</scope>
    <scope>PROTEIN SEQUENCE OF 4-32; 39-51; 54-64; 92-112; 157-177; 196-220 AND 270-280</scope>
    <scope>SUBCELLULAR LOCATION</scope>
    <source>
        <tissue>Leaf</tissue>
    </source>
</reference>
<dbReference type="EC" id="1.-.-.-"/>
<dbReference type="EMBL" id="AJ511792">
    <property type="protein sequence ID" value="CAD54431.1"/>
    <property type="molecule type" value="mRNA"/>
</dbReference>
<dbReference type="SMR" id="Q8H0M1"/>
<dbReference type="OrthoDB" id="48317at2759"/>
<dbReference type="Proteomes" id="UP001155700">
    <property type="component" value="Unplaced"/>
</dbReference>
<dbReference type="GO" id="GO:0009706">
    <property type="term" value="C:chloroplast inner membrane"/>
    <property type="evidence" value="ECO:0007669"/>
    <property type="project" value="UniProtKB-SubCell"/>
</dbReference>
<dbReference type="GO" id="GO:0016491">
    <property type="term" value="F:oxidoreductase activity"/>
    <property type="evidence" value="ECO:0007669"/>
    <property type="project" value="UniProtKB-KW"/>
</dbReference>
<dbReference type="CDD" id="cd08267">
    <property type="entry name" value="MDR1"/>
    <property type="match status" value="1"/>
</dbReference>
<dbReference type="Gene3D" id="3.90.180.10">
    <property type="entry name" value="Medium-chain alcohol dehydrogenases, catalytic domain"/>
    <property type="match status" value="1"/>
</dbReference>
<dbReference type="Gene3D" id="3.40.50.720">
    <property type="entry name" value="NAD(P)-binding Rossmann-like Domain"/>
    <property type="match status" value="1"/>
</dbReference>
<dbReference type="InterPro" id="IPR013154">
    <property type="entry name" value="ADH-like_N"/>
</dbReference>
<dbReference type="InterPro" id="IPR052733">
    <property type="entry name" value="Chloroplast_QOR"/>
</dbReference>
<dbReference type="InterPro" id="IPR011032">
    <property type="entry name" value="GroES-like_sf"/>
</dbReference>
<dbReference type="InterPro" id="IPR036291">
    <property type="entry name" value="NAD(P)-bd_dom_sf"/>
</dbReference>
<dbReference type="InterPro" id="IPR020843">
    <property type="entry name" value="PKS_ER"/>
</dbReference>
<dbReference type="PANTHER" id="PTHR44013">
    <property type="entry name" value="ZINC-TYPE ALCOHOL DEHYDROGENASE-LIKE PROTEIN C16A3.02C"/>
    <property type="match status" value="1"/>
</dbReference>
<dbReference type="PANTHER" id="PTHR44013:SF1">
    <property type="entry name" value="ZINC-TYPE ALCOHOL DEHYDROGENASE-LIKE PROTEIN C16A3.02C"/>
    <property type="match status" value="1"/>
</dbReference>
<dbReference type="Pfam" id="PF08240">
    <property type="entry name" value="ADH_N"/>
    <property type="match status" value="1"/>
</dbReference>
<dbReference type="Pfam" id="PF13602">
    <property type="entry name" value="ADH_zinc_N_2"/>
    <property type="match status" value="1"/>
</dbReference>
<dbReference type="SMART" id="SM00829">
    <property type="entry name" value="PKS_ER"/>
    <property type="match status" value="1"/>
</dbReference>
<dbReference type="SUPFAM" id="SSF50129">
    <property type="entry name" value="GroES-like"/>
    <property type="match status" value="1"/>
</dbReference>
<dbReference type="SUPFAM" id="SSF51735">
    <property type="entry name" value="NAD(P)-binding Rossmann-fold domains"/>
    <property type="match status" value="1"/>
</dbReference>
<comment type="subcellular location">
    <subcellularLocation>
        <location evidence="1">Plastid</location>
        <location evidence="1">Chloroplast inner membrane</location>
    </subcellularLocation>
</comment>
<comment type="domain">
    <text>Neither the N-terminal nor the C-terminal are essential for chloroplastic localization of the protein. An internal region (59-Pro-Ala-100) is essential but not sufficient for plastid localization.</text>
</comment>
<comment type="PTM">
    <text>The transit peptide is not cleaved.</text>
</comment>
<comment type="similarity">
    <text evidence="2">Belongs to the zinc-containing alcohol dehydrogenase family. Quinone oxidoreductase subfamily.</text>
</comment>
<accession>Q8H0M1</accession>
<name>QORH_SPIOL</name>